<organism>
    <name type="scientific">Dictyostelium discoideum</name>
    <name type="common">Social amoeba</name>
    <dbReference type="NCBI Taxonomy" id="44689"/>
    <lineage>
        <taxon>Eukaryota</taxon>
        <taxon>Amoebozoa</taxon>
        <taxon>Evosea</taxon>
        <taxon>Eumycetozoa</taxon>
        <taxon>Dictyostelia</taxon>
        <taxon>Dictyosteliales</taxon>
        <taxon>Dictyosteliaceae</taxon>
        <taxon>Dictyostelium</taxon>
    </lineage>
</organism>
<dbReference type="EC" id="5.2.1.8" evidence="2"/>
<dbReference type="EMBL" id="AAFI02000079">
    <property type="protein sequence ID" value="EAL64753.1"/>
    <property type="molecule type" value="Genomic_DNA"/>
</dbReference>
<dbReference type="RefSeq" id="XP_638264.1">
    <property type="nucleotide sequence ID" value="XM_633172.1"/>
</dbReference>
<dbReference type="SMR" id="Q54NB6"/>
<dbReference type="FunCoup" id="Q54NB6">
    <property type="interactions" value="59"/>
</dbReference>
<dbReference type="IntAct" id="Q54NB6">
    <property type="interactions" value="1"/>
</dbReference>
<dbReference type="STRING" id="44689.Q54NB6"/>
<dbReference type="PaxDb" id="44689-DDB0233548"/>
<dbReference type="EnsemblProtists" id="EAL64753">
    <property type="protein sequence ID" value="EAL64753"/>
    <property type="gene ID" value="DDB_G0285357"/>
</dbReference>
<dbReference type="GeneID" id="8625072"/>
<dbReference type="KEGG" id="ddi:DDB_G0285357"/>
<dbReference type="dictyBase" id="DDB_G0285357"/>
<dbReference type="VEuPathDB" id="AmoebaDB:DDB_G0285357"/>
<dbReference type="eggNOG" id="KOG0552">
    <property type="taxonomic scope" value="Eukaryota"/>
</dbReference>
<dbReference type="HOGENOM" id="CLU_022297_2_0_1"/>
<dbReference type="InParanoid" id="Q54NB6"/>
<dbReference type="OMA" id="KVEMRYI"/>
<dbReference type="PRO" id="PR:Q54NB6"/>
<dbReference type="Proteomes" id="UP000002195">
    <property type="component" value="Chromosome 4"/>
</dbReference>
<dbReference type="GO" id="GO:0000785">
    <property type="term" value="C:chromatin"/>
    <property type="evidence" value="ECO:0000318"/>
    <property type="project" value="GO_Central"/>
</dbReference>
<dbReference type="GO" id="GO:0005730">
    <property type="term" value="C:nucleolus"/>
    <property type="evidence" value="ECO:0000318"/>
    <property type="project" value="GO_Central"/>
</dbReference>
<dbReference type="GO" id="GO:0003755">
    <property type="term" value="F:peptidyl-prolyl cis-trans isomerase activity"/>
    <property type="evidence" value="ECO:0000318"/>
    <property type="project" value="GO_Central"/>
</dbReference>
<dbReference type="FunFam" id="3.10.50.40:FF:000006">
    <property type="entry name" value="Peptidyl-prolyl cis-trans isomerase"/>
    <property type="match status" value="1"/>
</dbReference>
<dbReference type="Gene3D" id="3.10.50.40">
    <property type="match status" value="1"/>
</dbReference>
<dbReference type="Gene3D" id="2.60.120.340">
    <property type="entry name" value="Nucleoplasmin core domain"/>
    <property type="match status" value="1"/>
</dbReference>
<dbReference type="InterPro" id="IPR041232">
    <property type="entry name" value="NPL"/>
</dbReference>
<dbReference type="InterPro" id="IPR046357">
    <property type="entry name" value="PPIase_dom_sf"/>
</dbReference>
<dbReference type="InterPro" id="IPR001179">
    <property type="entry name" value="PPIase_FKBP_dom"/>
</dbReference>
<dbReference type="InterPro" id="IPR023566">
    <property type="entry name" value="PPIase_Fpr3/Fpr4-like"/>
</dbReference>
<dbReference type="PANTHER" id="PTHR43811:SF19">
    <property type="entry name" value="39 KDA FK506-BINDING NUCLEAR PROTEIN"/>
    <property type="match status" value="1"/>
</dbReference>
<dbReference type="PANTHER" id="PTHR43811">
    <property type="entry name" value="FKBP-TYPE PEPTIDYL-PROLYL CIS-TRANS ISOMERASE FKPA"/>
    <property type="match status" value="1"/>
</dbReference>
<dbReference type="Pfam" id="PF00254">
    <property type="entry name" value="FKBP_C"/>
    <property type="match status" value="1"/>
</dbReference>
<dbReference type="Pfam" id="PF17800">
    <property type="entry name" value="NPL"/>
    <property type="match status" value="1"/>
</dbReference>
<dbReference type="PIRSF" id="PIRSF001473">
    <property type="entry name" value="FK506-bp_FPR3"/>
    <property type="match status" value="1"/>
</dbReference>
<dbReference type="SUPFAM" id="SSF54534">
    <property type="entry name" value="FKBP-like"/>
    <property type="match status" value="1"/>
</dbReference>
<dbReference type="PROSITE" id="PS50059">
    <property type="entry name" value="FKBP_PPIASE"/>
    <property type="match status" value="1"/>
</dbReference>
<name>FKBP4_DICDI</name>
<accession>Q54NB6</accession>
<keyword id="KW-0143">Chaperone</keyword>
<keyword id="KW-0413">Isomerase</keyword>
<keyword id="KW-0539">Nucleus</keyword>
<keyword id="KW-1185">Reference proteome</keyword>
<keyword id="KW-0697">Rotamase</keyword>
<comment type="function">
    <text evidence="2">PPIase that acts as a histone chaperone. Histone proline isomerase that increases the rate of cis-trans isomerization at prolines on the histone H3 N-terminal tail. Proline isomerization influences H3 methylation thereby regulating gene expression.</text>
</comment>
<comment type="catalytic activity">
    <reaction evidence="2">
        <text>[protein]-peptidylproline (omega=180) = [protein]-peptidylproline (omega=0)</text>
        <dbReference type="Rhea" id="RHEA:16237"/>
        <dbReference type="Rhea" id="RHEA-COMP:10747"/>
        <dbReference type="Rhea" id="RHEA-COMP:10748"/>
        <dbReference type="ChEBI" id="CHEBI:83833"/>
        <dbReference type="ChEBI" id="CHEBI:83834"/>
        <dbReference type="EC" id="5.2.1.8"/>
    </reaction>
</comment>
<comment type="activity regulation">
    <text evidence="1">Inhibited by both FK506 and rapamycin.</text>
</comment>
<comment type="subunit">
    <text evidence="2">Binds to histones H3 and H4.</text>
</comment>
<comment type="subcellular location">
    <subcellularLocation>
        <location evidence="2">Nucleus</location>
    </subcellularLocation>
</comment>
<comment type="similarity">
    <text evidence="5">Belongs to the FKBP-type PPIase family.</text>
</comment>
<reference key="1">
    <citation type="journal article" date="2005" name="Nature">
        <title>The genome of the social amoeba Dictyostelium discoideum.</title>
        <authorList>
            <person name="Eichinger L."/>
            <person name="Pachebat J.A."/>
            <person name="Gloeckner G."/>
            <person name="Rajandream M.A."/>
            <person name="Sucgang R."/>
            <person name="Berriman M."/>
            <person name="Song J."/>
            <person name="Olsen R."/>
            <person name="Szafranski K."/>
            <person name="Xu Q."/>
            <person name="Tunggal B."/>
            <person name="Kummerfeld S."/>
            <person name="Madera M."/>
            <person name="Konfortov B.A."/>
            <person name="Rivero F."/>
            <person name="Bankier A.T."/>
            <person name="Lehmann R."/>
            <person name="Hamlin N."/>
            <person name="Davies R."/>
            <person name="Gaudet P."/>
            <person name="Fey P."/>
            <person name="Pilcher K."/>
            <person name="Chen G."/>
            <person name="Saunders D."/>
            <person name="Sodergren E.J."/>
            <person name="Davis P."/>
            <person name="Kerhornou A."/>
            <person name="Nie X."/>
            <person name="Hall N."/>
            <person name="Anjard C."/>
            <person name="Hemphill L."/>
            <person name="Bason N."/>
            <person name="Farbrother P."/>
            <person name="Desany B."/>
            <person name="Just E."/>
            <person name="Morio T."/>
            <person name="Rost R."/>
            <person name="Churcher C.M."/>
            <person name="Cooper J."/>
            <person name="Haydock S."/>
            <person name="van Driessche N."/>
            <person name="Cronin A."/>
            <person name="Goodhead I."/>
            <person name="Muzny D.M."/>
            <person name="Mourier T."/>
            <person name="Pain A."/>
            <person name="Lu M."/>
            <person name="Harper D."/>
            <person name="Lindsay R."/>
            <person name="Hauser H."/>
            <person name="James K.D."/>
            <person name="Quiles M."/>
            <person name="Madan Babu M."/>
            <person name="Saito T."/>
            <person name="Buchrieser C."/>
            <person name="Wardroper A."/>
            <person name="Felder M."/>
            <person name="Thangavelu M."/>
            <person name="Johnson D."/>
            <person name="Knights A."/>
            <person name="Loulseged H."/>
            <person name="Mungall K.L."/>
            <person name="Oliver K."/>
            <person name="Price C."/>
            <person name="Quail M.A."/>
            <person name="Urushihara H."/>
            <person name="Hernandez J."/>
            <person name="Rabbinowitsch E."/>
            <person name="Steffen D."/>
            <person name="Sanders M."/>
            <person name="Ma J."/>
            <person name="Kohara Y."/>
            <person name="Sharp S."/>
            <person name="Simmonds M.N."/>
            <person name="Spiegler S."/>
            <person name="Tivey A."/>
            <person name="Sugano S."/>
            <person name="White B."/>
            <person name="Walker D."/>
            <person name="Woodward J.R."/>
            <person name="Winckler T."/>
            <person name="Tanaka Y."/>
            <person name="Shaulsky G."/>
            <person name="Schleicher M."/>
            <person name="Weinstock G.M."/>
            <person name="Rosenthal A."/>
            <person name="Cox E.C."/>
            <person name="Chisholm R.L."/>
            <person name="Gibbs R.A."/>
            <person name="Loomis W.F."/>
            <person name="Platzer M."/>
            <person name="Kay R.R."/>
            <person name="Williams J.G."/>
            <person name="Dear P.H."/>
            <person name="Noegel A.A."/>
            <person name="Barrell B.G."/>
            <person name="Kuspa A."/>
        </authorList>
    </citation>
    <scope>NUCLEOTIDE SEQUENCE [LARGE SCALE GENOMIC DNA]</scope>
    <source>
        <strain>AX4</strain>
    </source>
</reference>
<reference key="2">
    <citation type="journal article" date="2006" name="J. Proteome Res.">
        <title>Identification of novel centrosomal proteins in Dictyostelium discoideum by comparative proteomic approaches.</title>
        <authorList>
            <person name="Reinders Y."/>
            <person name="Schulz I."/>
            <person name="Graef R."/>
            <person name="Sickmann A."/>
        </authorList>
    </citation>
    <scope>IDENTIFICATION BY MASS SPECTROMETRY [LARGE SCALE ANALYSIS]</scope>
</reference>
<feature type="chain" id="PRO_0000331283" description="FK506-binding protein 4">
    <location>
        <begin position="1"/>
        <end position="364"/>
    </location>
</feature>
<feature type="domain" description="PPIase FKBP-type" evidence="3">
    <location>
        <begin position="277"/>
        <end position="363"/>
    </location>
</feature>
<feature type="region of interest" description="Disordered" evidence="4">
    <location>
        <begin position="92"/>
        <end position="148"/>
    </location>
</feature>
<feature type="region of interest" description="Disordered" evidence="4">
    <location>
        <begin position="168"/>
        <end position="239"/>
    </location>
</feature>
<feature type="compositionally biased region" description="Acidic residues" evidence="4">
    <location>
        <begin position="94"/>
        <end position="148"/>
    </location>
</feature>
<feature type="compositionally biased region" description="Basic and acidic residues" evidence="4">
    <location>
        <begin position="168"/>
        <end position="184"/>
    </location>
</feature>
<feature type="compositionally biased region" description="Low complexity" evidence="4">
    <location>
        <begin position="185"/>
        <end position="239"/>
    </location>
</feature>
<protein>
    <recommendedName>
        <fullName>FK506-binding protein 4</fullName>
        <ecNumber evidence="2">5.2.1.8</ecNumber>
    </recommendedName>
    <alternativeName>
        <fullName evidence="2">Histone proline isomerase</fullName>
    </alternativeName>
    <alternativeName>
        <fullName>Peptidyl-prolyl cis-trans isomerase</fullName>
        <shortName>PPIase</shortName>
    </alternativeName>
    <alternativeName>
        <fullName>Rotamase</fullName>
    </alternativeName>
</protein>
<sequence length="364" mass="39862">MFWGIEISKVPVKFTPAFDLHITTACLSAVAKDTGRNVLQVKYDGKTYSLCSLKLNATEHSVLDTNFEEGKEVEFSVSGNNTICLTGYFVDSMFGDDEHGEDEDNEEEEGEEGEDEEMEGEDEDEDEEDEDEEDEDEEEEDDEEDDEINKELERQILEQALKRKAQIEADKNKQQKKPKQEEPVKQVTPVKPTAQAAKPTAATTTTTTTTTTTPTKQTTPAKPAAKPVTPTKPVTPTKPVEAAVVEKKKPTSSVVTLPSGLQYEDLVVGSGPSPKSGKKVGVKYIGKLTNGKTFDSSLRTPFTFRIGIREVIRGWDIGVASMKVGGKRRLTIPADLAYGRSGAPPSIPPNATLIFDVELVSCAQ</sequence>
<gene>
    <name type="primary">fkbp4</name>
    <name type="ORF">DDB_G0285357</name>
</gene>
<evidence type="ECO:0000250" key="1"/>
<evidence type="ECO:0000250" key="2">
    <source>
        <dbReference type="UniProtKB" id="Q06205"/>
    </source>
</evidence>
<evidence type="ECO:0000255" key="3">
    <source>
        <dbReference type="PROSITE-ProRule" id="PRU00277"/>
    </source>
</evidence>
<evidence type="ECO:0000256" key="4">
    <source>
        <dbReference type="SAM" id="MobiDB-lite"/>
    </source>
</evidence>
<evidence type="ECO:0000305" key="5"/>
<proteinExistence type="evidence at protein level"/>